<proteinExistence type="inferred from homology"/>
<protein>
    <recommendedName>
        <fullName>Chaperone protein ClpB</fullName>
    </recommendedName>
</protein>
<gene>
    <name type="primary">clpB</name>
    <name type="ordered locus">CBU_0094</name>
</gene>
<keyword id="KW-0067">ATP-binding</keyword>
<keyword id="KW-0143">Chaperone</keyword>
<keyword id="KW-0175">Coiled coil</keyword>
<keyword id="KW-0963">Cytoplasm</keyword>
<keyword id="KW-0547">Nucleotide-binding</keyword>
<keyword id="KW-1185">Reference proteome</keyword>
<keyword id="KW-0677">Repeat</keyword>
<keyword id="KW-0346">Stress response</keyword>
<reference key="1">
    <citation type="journal article" date="2003" name="Proc. Natl. Acad. Sci. U.S.A.">
        <title>Complete genome sequence of the Q-fever pathogen, Coxiella burnetii.</title>
        <authorList>
            <person name="Seshadri R."/>
            <person name="Paulsen I.T."/>
            <person name="Eisen J.A."/>
            <person name="Read T.D."/>
            <person name="Nelson K.E."/>
            <person name="Nelson W.C."/>
            <person name="Ward N.L."/>
            <person name="Tettelin H."/>
            <person name="Davidsen T.M."/>
            <person name="Beanan M.J."/>
            <person name="DeBoy R.T."/>
            <person name="Daugherty S.C."/>
            <person name="Brinkac L.M."/>
            <person name="Madupu R."/>
            <person name="Dodson R.J."/>
            <person name="Khouri H.M."/>
            <person name="Lee K.H."/>
            <person name="Carty H.A."/>
            <person name="Scanlan D."/>
            <person name="Heinzen R.A."/>
            <person name="Thompson H.A."/>
            <person name="Samuel J.E."/>
            <person name="Fraser C.M."/>
            <person name="Heidelberg J.F."/>
        </authorList>
    </citation>
    <scope>NUCLEOTIDE SEQUENCE [LARGE SCALE GENOMIC DNA]</scope>
    <source>
        <strain>RSA 493 / Nine Mile phase I</strain>
    </source>
</reference>
<accession>Q83F55</accession>
<feature type="chain" id="PRO_0000191117" description="Chaperone protein ClpB">
    <location>
        <begin position="1"/>
        <end position="859"/>
    </location>
</feature>
<feature type="domain" description="Clp R" evidence="2">
    <location>
        <begin position="3"/>
        <end position="146"/>
    </location>
</feature>
<feature type="region of interest" description="Repeat 1" evidence="2">
    <location>
        <begin position="6"/>
        <end position="71"/>
    </location>
</feature>
<feature type="region of interest" description="Repeat 2" evidence="2">
    <location>
        <begin position="83"/>
        <end position="146"/>
    </location>
</feature>
<feature type="region of interest" description="NBD1" evidence="1">
    <location>
        <begin position="159"/>
        <end position="340"/>
    </location>
</feature>
<feature type="region of interest" description="Linker" evidence="1">
    <location>
        <begin position="341"/>
        <end position="547"/>
    </location>
</feature>
<feature type="region of interest" description="NBD2" evidence="1">
    <location>
        <begin position="557"/>
        <end position="766"/>
    </location>
</feature>
<feature type="region of interest" description="C-terminal" evidence="1">
    <location>
        <begin position="767"/>
        <end position="859"/>
    </location>
</feature>
<feature type="coiled-coil region" evidence="1">
    <location>
        <begin position="391"/>
        <end position="525"/>
    </location>
</feature>
<feature type="binding site" evidence="1">
    <location>
        <begin position="206"/>
        <end position="213"/>
    </location>
    <ligand>
        <name>ATP</name>
        <dbReference type="ChEBI" id="CHEBI:30616"/>
        <label>1</label>
    </ligand>
</feature>
<feature type="binding site" evidence="1">
    <location>
        <begin position="607"/>
        <end position="614"/>
    </location>
    <ligand>
        <name>ATP</name>
        <dbReference type="ChEBI" id="CHEBI:30616"/>
        <label>2</label>
    </ligand>
</feature>
<comment type="function">
    <text evidence="1">Part of a stress-induced multi-chaperone system, it is involved in the recovery of the cell from heat-induced damage, in cooperation with DnaK, DnaJ and GrpE. Acts before DnaK, in the processing of protein aggregates. Protein binding stimulates the ATPase activity; ATP hydrolysis unfolds the denatured protein aggregates, which probably helps expose new hydrophobic binding sites on the surface of ClpB-bound aggregates, contributing to the solubilization and refolding of denatured protein aggregates by DnaK (By similarity).</text>
</comment>
<comment type="subunit">
    <text evidence="1">Homohexamer. The oligomerization is ATP-dependent (By similarity).</text>
</comment>
<comment type="subcellular location">
    <subcellularLocation>
        <location evidence="3">Cytoplasm</location>
    </subcellularLocation>
</comment>
<comment type="domain">
    <text evidence="1">The Clp repeat (R) domain probably functions as a substrate-discriminating domain, recruiting aggregated proteins to the ClpB hexamer and/or stabilizing bound proteins. The NBD2 domain is responsible for oligomerization, whereas the NBD1 domain stabilizes the hexamer probably in an ATP-dependent manner. The movement of the coiled-coil domain is essential for ClpB ability to rescue proteins from an aggregated state, probably by pulling apart large aggregated proteins, which are bound between the coiled-coils motifs of adjacent ClpB subunits in the functional hexamer (By similarity).</text>
</comment>
<comment type="similarity">
    <text evidence="3">Belongs to the ClpA/ClpB family.</text>
</comment>
<dbReference type="EMBL" id="AE016828">
    <property type="protein sequence ID" value="AAO89660.1"/>
    <property type="molecule type" value="Genomic_DNA"/>
</dbReference>
<dbReference type="RefSeq" id="NP_819146.1">
    <property type="nucleotide sequence ID" value="NC_002971.4"/>
</dbReference>
<dbReference type="RefSeq" id="WP_010957374.1">
    <property type="nucleotide sequence ID" value="NZ_CCYB01000063.1"/>
</dbReference>
<dbReference type="SMR" id="Q83F55"/>
<dbReference type="STRING" id="227377.CBU_0094"/>
<dbReference type="EnsemblBacteria" id="AAO89660">
    <property type="protein sequence ID" value="AAO89660"/>
    <property type="gene ID" value="CBU_0094"/>
</dbReference>
<dbReference type="GeneID" id="1207964"/>
<dbReference type="KEGG" id="cbu:CBU_0094"/>
<dbReference type="PATRIC" id="fig|227377.7.peg.95"/>
<dbReference type="eggNOG" id="COG0542">
    <property type="taxonomic scope" value="Bacteria"/>
</dbReference>
<dbReference type="HOGENOM" id="CLU_005070_4_1_6"/>
<dbReference type="OrthoDB" id="9803641at2"/>
<dbReference type="Proteomes" id="UP000002671">
    <property type="component" value="Chromosome"/>
</dbReference>
<dbReference type="GO" id="GO:0005737">
    <property type="term" value="C:cytoplasm"/>
    <property type="evidence" value="ECO:0000318"/>
    <property type="project" value="GO_Central"/>
</dbReference>
<dbReference type="GO" id="GO:0005524">
    <property type="term" value="F:ATP binding"/>
    <property type="evidence" value="ECO:0007669"/>
    <property type="project" value="UniProtKB-KW"/>
</dbReference>
<dbReference type="GO" id="GO:0016887">
    <property type="term" value="F:ATP hydrolysis activity"/>
    <property type="evidence" value="ECO:0000318"/>
    <property type="project" value="GO_Central"/>
</dbReference>
<dbReference type="GO" id="GO:0034605">
    <property type="term" value="P:cellular response to heat"/>
    <property type="evidence" value="ECO:0000318"/>
    <property type="project" value="GO_Central"/>
</dbReference>
<dbReference type="GO" id="GO:0042026">
    <property type="term" value="P:protein refolding"/>
    <property type="evidence" value="ECO:0007669"/>
    <property type="project" value="InterPro"/>
</dbReference>
<dbReference type="CDD" id="cd00009">
    <property type="entry name" value="AAA"/>
    <property type="match status" value="1"/>
</dbReference>
<dbReference type="CDD" id="cd19499">
    <property type="entry name" value="RecA-like_ClpB_Hsp104-like"/>
    <property type="match status" value="1"/>
</dbReference>
<dbReference type="FunFam" id="1.10.8.60:FF:000017">
    <property type="entry name" value="ATP-dependent chaperone ClpB"/>
    <property type="match status" value="1"/>
</dbReference>
<dbReference type="FunFam" id="3.40.50.300:FF:000120">
    <property type="entry name" value="ATP-dependent chaperone ClpB"/>
    <property type="match status" value="1"/>
</dbReference>
<dbReference type="FunFam" id="3.40.50.300:FF:000025">
    <property type="entry name" value="ATP-dependent Clp protease subunit"/>
    <property type="match status" value="1"/>
</dbReference>
<dbReference type="FunFam" id="3.40.50.300:FF:000010">
    <property type="entry name" value="Chaperone clpB 1, putative"/>
    <property type="match status" value="1"/>
</dbReference>
<dbReference type="Gene3D" id="1.10.8.60">
    <property type="match status" value="1"/>
</dbReference>
<dbReference type="Gene3D" id="1.10.1780.10">
    <property type="entry name" value="Clp, N-terminal domain"/>
    <property type="match status" value="1"/>
</dbReference>
<dbReference type="Gene3D" id="3.40.50.300">
    <property type="entry name" value="P-loop containing nucleotide triphosphate hydrolases"/>
    <property type="match status" value="3"/>
</dbReference>
<dbReference type="InterPro" id="IPR003593">
    <property type="entry name" value="AAA+_ATPase"/>
</dbReference>
<dbReference type="InterPro" id="IPR003959">
    <property type="entry name" value="ATPase_AAA_core"/>
</dbReference>
<dbReference type="InterPro" id="IPR017730">
    <property type="entry name" value="Chaperonin_ClpB"/>
</dbReference>
<dbReference type="InterPro" id="IPR019489">
    <property type="entry name" value="Clp_ATPase_C"/>
</dbReference>
<dbReference type="InterPro" id="IPR036628">
    <property type="entry name" value="Clp_N_dom_sf"/>
</dbReference>
<dbReference type="InterPro" id="IPR004176">
    <property type="entry name" value="Clp_R_dom"/>
</dbReference>
<dbReference type="InterPro" id="IPR001270">
    <property type="entry name" value="ClpA/B"/>
</dbReference>
<dbReference type="InterPro" id="IPR018368">
    <property type="entry name" value="ClpA/B_CS1"/>
</dbReference>
<dbReference type="InterPro" id="IPR028299">
    <property type="entry name" value="ClpA/B_CS2"/>
</dbReference>
<dbReference type="InterPro" id="IPR041546">
    <property type="entry name" value="ClpA/ClpB_AAA_lid"/>
</dbReference>
<dbReference type="InterPro" id="IPR050130">
    <property type="entry name" value="ClpA_ClpB"/>
</dbReference>
<dbReference type="InterPro" id="IPR027417">
    <property type="entry name" value="P-loop_NTPase"/>
</dbReference>
<dbReference type="NCBIfam" id="TIGR03346">
    <property type="entry name" value="chaperone_ClpB"/>
    <property type="match status" value="1"/>
</dbReference>
<dbReference type="NCBIfam" id="NF008118">
    <property type="entry name" value="PRK10865.1"/>
    <property type="match status" value="1"/>
</dbReference>
<dbReference type="PANTHER" id="PTHR11638">
    <property type="entry name" value="ATP-DEPENDENT CLP PROTEASE"/>
    <property type="match status" value="1"/>
</dbReference>
<dbReference type="PANTHER" id="PTHR11638:SF18">
    <property type="entry name" value="HEAT SHOCK PROTEIN 104"/>
    <property type="match status" value="1"/>
</dbReference>
<dbReference type="Pfam" id="PF00004">
    <property type="entry name" value="AAA"/>
    <property type="match status" value="1"/>
</dbReference>
<dbReference type="Pfam" id="PF07724">
    <property type="entry name" value="AAA_2"/>
    <property type="match status" value="1"/>
</dbReference>
<dbReference type="Pfam" id="PF17871">
    <property type="entry name" value="AAA_lid_9"/>
    <property type="match status" value="1"/>
</dbReference>
<dbReference type="Pfam" id="PF02861">
    <property type="entry name" value="Clp_N"/>
    <property type="match status" value="2"/>
</dbReference>
<dbReference type="Pfam" id="PF10431">
    <property type="entry name" value="ClpB_D2-small"/>
    <property type="match status" value="1"/>
</dbReference>
<dbReference type="PRINTS" id="PR00300">
    <property type="entry name" value="CLPPROTEASEA"/>
</dbReference>
<dbReference type="SMART" id="SM00382">
    <property type="entry name" value="AAA"/>
    <property type="match status" value="2"/>
</dbReference>
<dbReference type="SMART" id="SM01086">
    <property type="entry name" value="ClpB_D2-small"/>
    <property type="match status" value="1"/>
</dbReference>
<dbReference type="SUPFAM" id="SSF81923">
    <property type="entry name" value="Double Clp-N motif"/>
    <property type="match status" value="1"/>
</dbReference>
<dbReference type="SUPFAM" id="SSF52540">
    <property type="entry name" value="P-loop containing nucleoside triphosphate hydrolases"/>
    <property type="match status" value="2"/>
</dbReference>
<dbReference type="PROSITE" id="PS51903">
    <property type="entry name" value="CLP_R"/>
    <property type="match status" value="1"/>
</dbReference>
<dbReference type="PROSITE" id="PS00870">
    <property type="entry name" value="CLPAB_1"/>
    <property type="match status" value="1"/>
</dbReference>
<dbReference type="PROSITE" id="PS00871">
    <property type="entry name" value="CLPAB_2"/>
    <property type="match status" value="1"/>
</dbReference>
<sequence length="859" mass="96769">MRIDKFTTAFQTALADAQSLAVGRDHQFIEPAHVMKVLLEQTQGTVAPLLEQSKVNLSRLIDGVNKAIDSYPQVEGTGGEVHVSRELSKILTLMDKFAQQNKDQYISSEWFIPAALEAKGQLRDVLIEAGADKKAIEKNIMNLRKGERVTEQSAEDQRQALAKYTIDLTEKAETGKLDPVIGRDEEIRRTVQVLQRRTKNNPVLIGEPGVGKTAIVEGLAQRIVNGEVPEGLKQKRLLALDMGALIAGAKFRGEFEERLKAVLKDIAKEEGRVILFIDELHTMVGAGKAEGAMDAGNMLKPALARGELHCVGATTLDEYRKYIEKDAALERRFQKVLVEEPSTEDAIAILRGLKERYEVHHGVEITDPAIIAAATLSQRYITDRNLPDKAIDLIDEAASQIRMEMDSKPVELDRLERRLIQLKIEREALKKETDEASKKRLSDLETEIKNVEKEYSDLEEVWKSEKASLHGTQQIKEELEQARIELEAAGRAGDLARMSELQYGIIPELDKKLKAASQKEEQFHDHKLLRSRVTEEEVAEVVSKWTHIPVSKMLEGEREKLLHMETELHKRVIGQDEAVNAVANAIRRSRAGLSDPNRPVGSFLFLGPTGVGKTELCKALAVFLFDTEDAMVRIDMSEFMEKHSVARLIGAPPGYVGYEEGGYLTEAIRRRPYSVILLDEIEKAHNDVFNVLLQVLDDGRLTDGQGRTVDFRNTVIVMTSNLGSDLIREFSGENYDKMKDAVMEVVAQHFRPEFINRIDEAVVFHSLKKEQIRNIAIIQIDRIKKRLKEKDYQLTISDDALDYLSELGYDPVYGARPLKRVLQQQLENPLSQKILEGKFVPGSLINIEKKGEQLEFKEA</sequence>
<name>CLPB_COXBU</name>
<evidence type="ECO:0000250" key="1"/>
<evidence type="ECO:0000255" key="2">
    <source>
        <dbReference type="PROSITE-ProRule" id="PRU01251"/>
    </source>
</evidence>
<evidence type="ECO:0000305" key="3"/>
<organism>
    <name type="scientific">Coxiella burnetii (strain RSA 493 / Nine Mile phase I)</name>
    <dbReference type="NCBI Taxonomy" id="227377"/>
    <lineage>
        <taxon>Bacteria</taxon>
        <taxon>Pseudomonadati</taxon>
        <taxon>Pseudomonadota</taxon>
        <taxon>Gammaproteobacteria</taxon>
        <taxon>Legionellales</taxon>
        <taxon>Coxiellaceae</taxon>
        <taxon>Coxiella</taxon>
    </lineage>
</organism>